<name>DAPE_RICB8</name>
<sequence>MHTTYLKNLIGFESLTPQSNGAIEYIDDLLKEHGFKTEVKIFGETEQVTNLYAVYGNSKPNICFVGHVDVVPAGDPNLWHNSNPFKAHEQEGKIYGRGTVDMKGSIACFLAASLDFIKNNTDFVGSISFLLTSDEEGKAKHGTKEMLQYIYNQGHEIDFAIVGEPTCEKEIGDTIKIGRRGSINFKLAVKGLGGHVAYPQKANNPLPCLIRILNELTNIKLDKGTEFFQNSNLEVTNIDVDNNTTNVIPETATVHFNIRFNNLHSAETLAKQVEEIIKQHCQKHKLDYTLEYNSSADSFIQNPNDKIKEFATIVEKTLNIKPNFSTSGGTSDARFVKNYCPLVEFGLLSDTAHKINEYTKISDLQKLYDVYYNFLMETLNVTGSPPLLGMT</sequence>
<gene>
    <name evidence="1" type="primary">dapE</name>
    <name type="ordered locus">A1I_07900</name>
</gene>
<accession>A8GYC8</accession>
<organism>
    <name type="scientific">Rickettsia bellii (strain OSU 85-389)</name>
    <dbReference type="NCBI Taxonomy" id="391896"/>
    <lineage>
        <taxon>Bacteria</taxon>
        <taxon>Pseudomonadati</taxon>
        <taxon>Pseudomonadota</taxon>
        <taxon>Alphaproteobacteria</taxon>
        <taxon>Rickettsiales</taxon>
        <taxon>Rickettsiaceae</taxon>
        <taxon>Rickettsieae</taxon>
        <taxon>Rickettsia</taxon>
        <taxon>belli group</taxon>
    </lineage>
</organism>
<keyword id="KW-0028">Amino-acid biosynthesis</keyword>
<keyword id="KW-0170">Cobalt</keyword>
<keyword id="KW-0220">Diaminopimelate biosynthesis</keyword>
<keyword id="KW-0378">Hydrolase</keyword>
<keyword id="KW-0457">Lysine biosynthesis</keyword>
<keyword id="KW-0479">Metal-binding</keyword>
<keyword id="KW-0862">Zinc</keyword>
<dbReference type="EC" id="3.5.1.18" evidence="1"/>
<dbReference type="EMBL" id="CP000849">
    <property type="protein sequence ID" value="ABV79878.1"/>
    <property type="molecule type" value="Genomic_DNA"/>
</dbReference>
<dbReference type="RefSeq" id="WP_012152314.1">
    <property type="nucleotide sequence ID" value="NC_009883.1"/>
</dbReference>
<dbReference type="SMR" id="A8GYC8"/>
<dbReference type="KEGG" id="rbo:A1I_07900"/>
<dbReference type="HOGENOM" id="CLU_021802_4_0_5"/>
<dbReference type="UniPathway" id="UPA00034">
    <property type="reaction ID" value="UER00021"/>
</dbReference>
<dbReference type="GO" id="GO:0008777">
    <property type="term" value="F:acetylornithine deacetylase activity"/>
    <property type="evidence" value="ECO:0007669"/>
    <property type="project" value="TreeGrafter"/>
</dbReference>
<dbReference type="GO" id="GO:0050897">
    <property type="term" value="F:cobalt ion binding"/>
    <property type="evidence" value="ECO:0007669"/>
    <property type="project" value="UniProtKB-UniRule"/>
</dbReference>
<dbReference type="GO" id="GO:0009014">
    <property type="term" value="F:succinyl-diaminopimelate desuccinylase activity"/>
    <property type="evidence" value="ECO:0007669"/>
    <property type="project" value="UniProtKB-UniRule"/>
</dbReference>
<dbReference type="GO" id="GO:0008270">
    <property type="term" value="F:zinc ion binding"/>
    <property type="evidence" value="ECO:0007669"/>
    <property type="project" value="UniProtKB-UniRule"/>
</dbReference>
<dbReference type="GO" id="GO:0019877">
    <property type="term" value="P:diaminopimelate biosynthetic process"/>
    <property type="evidence" value="ECO:0007669"/>
    <property type="project" value="UniProtKB-UniRule"/>
</dbReference>
<dbReference type="GO" id="GO:0006526">
    <property type="term" value="P:L-arginine biosynthetic process"/>
    <property type="evidence" value="ECO:0007669"/>
    <property type="project" value="TreeGrafter"/>
</dbReference>
<dbReference type="GO" id="GO:0009089">
    <property type="term" value="P:lysine biosynthetic process via diaminopimelate"/>
    <property type="evidence" value="ECO:0007669"/>
    <property type="project" value="UniProtKB-UniRule"/>
</dbReference>
<dbReference type="CDD" id="cd03891">
    <property type="entry name" value="M20_DapE_proteobac"/>
    <property type="match status" value="1"/>
</dbReference>
<dbReference type="Gene3D" id="3.30.70.360">
    <property type="match status" value="1"/>
</dbReference>
<dbReference type="Gene3D" id="3.40.630.10">
    <property type="entry name" value="Zn peptidases"/>
    <property type="match status" value="2"/>
</dbReference>
<dbReference type="HAMAP" id="MF_01690">
    <property type="entry name" value="DapE"/>
    <property type="match status" value="1"/>
</dbReference>
<dbReference type="InterPro" id="IPR001261">
    <property type="entry name" value="ArgE/DapE_CS"/>
</dbReference>
<dbReference type="InterPro" id="IPR036264">
    <property type="entry name" value="Bact_exopeptidase_dim_dom"/>
</dbReference>
<dbReference type="InterPro" id="IPR005941">
    <property type="entry name" value="DapE_proteobac"/>
</dbReference>
<dbReference type="InterPro" id="IPR002933">
    <property type="entry name" value="Peptidase_M20"/>
</dbReference>
<dbReference type="InterPro" id="IPR011650">
    <property type="entry name" value="Peptidase_M20_dimer"/>
</dbReference>
<dbReference type="InterPro" id="IPR050072">
    <property type="entry name" value="Peptidase_M20A"/>
</dbReference>
<dbReference type="NCBIfam" id="TIGR01246">
    <property type="entry name" value="dapE_proteo"/>
    <property type="match status" value="1"/>
</dbReference>
<dbReference type="NCBIfam" id="NF009557">
    <property type="entry name" value="PRK13009.1"/>
    <property type="match status" value="1"/>
</dbReference>
<dbReference type="PANTHER" id="PTHR43808">
    <property type="entry name" value="ACETYLORNITHINE DEACETYLASE"/>
    <property type="match status" value="1"/>
</dbReference>
<dbReference type="PANTHER" id="PTHR43808:SF31">
    <property type="entry name" value="N-ACETYL-L-CITRULLINE DEACETYLASE"/>
    <property type="match status" value="1"/>
</dbReference>
<dbReference type="Pfam" id="PF07687">
    <property type="entry name" value="M20_dimer"/>
    <property type="match status" value="1"/>
</dbReference>
<dbReference type="Pfam" id="PF01546">
    <property type="entry name" value="Peptidase_M20"/>
    <property type="match status" value="1"/>
</dbReference>
<dbReference type="SUPFAM" id="SSF55031">
    <property type="entry name" value="Bacterial exopeptidase dimerisation domain"/>
    <property type="match status" value="1"/>
</dbReference>
<dbReference type="SUPFAM" id="SSF53187">
    <property type="entry name" value="Zn-dependent exopeptidases"/>
    <property type="match status" value="1"/>
</dbReference>
<dbReference type="PROSITE" id="PS00759">
    <property type="entry name" value="ARGE_DAPE_CPG2_2"/>
    <property type="match status" value="1"/>
</dbReference>
<reference key="1">
    <citation type="submission" date="2007-09" db="EMBL/GenBank/DDBJ databases">
        <title>Complete genome sequencing of Rickettsia bellii.</title>
        <authorList>
            <person name="Madan A."/>
            <person name="Lee H."/>
            <person name="Madan A."/>
            <person name="Yoon J.-G."/>
            <person name="Ryu G.-Y."/>
            <person name="Dasch G."/>
            <person name="Ereemeva M."/>
        </authorList>
    </citation>
    <scope>NUCLEOTIDE SEQUENCE [LARGE SCALE GENOMIC DNA]</scope>
    <source>
        <strain>OSU 85-389</strain>
    </source>
</reference>
<comment type="function">
    <text evidence="1">Catalyzes the hydrolysis of N-succinyl-L,L-diaminopimelic acid (SDAP), forming succinate and LL-2,6-diaminopimelate (DAP), an intermediate involved in the bacterial biosynthesis of lysine and meso-diaminopimelic acid, an essential component of bacterial cell walls.</text>
</comment>
<comment type="catalytic activity">
    <reaction evidence="1">
        <text>N-succinyl-(2S,6S)-2,6-diaminopimelate + H2O = (2S,6S)-2,6-diaminopimelate + succinate</text>
        <dbReference type="Rhea" id="RHEA:22608"/>
        <dbReference type="ChEBI" id="CHEBI:15377"/>
        <dbReference type="ChEBI" id="CHEBI:30031"/>
        <dbReference type="ChEBI" id="CHEBI:57609"/>
        <dbReference type="ChEBI" id="CHEBI:58087"/>
        <dbReference type="EC" id="3.5.1.18"/>
    </reaction>
</comment>
<comment type="cofactor">
    <cofactor evidence="1">
        <name>Zn(2+)</name>
        <dbReference type="ChEBI" id="CHEBI:29105"/>
    </cofactor>
    <cofactor evidence="1">
        <name>Co(2+)</name>
        <dbReference type="ChEBI" id="CHEBI:48828"/>
    </cofactor>
    <text evidence="1">Binds 2 Zn(2+) or Co(2+) ions per subunit.</text>
</comment>
<comment type="pathway">
    <text evidence="1">Amino-acid biosynthesis; L-lysine biosynthesis via DAP pathway; LL-2,6-diaminopimelate from (S)-tetrahydrodipicolinate (succinylase route): step 3/3.</text>
</comment>
<comment type="subunit">
    <text evidence="1">Homodimer.</text>
</comment>
<comment type="similarity">
    <text evidence="1">Belongs to the peptidase M20A family. DapE subfamily.</text>
</comment>
<evidence type="ECO:0000255" key="1">
    <source>
        <dbReference type="HAMAP-Rule" id="MF_01690"/>
    </source>
</evidence>
<feature type="chain" id="PRO_0000375698" description="Succinyl-diaminopimelate desuccinylase">
    <location>
        <begin position="1"/>
        <end position="391"/>
    </location>
</feature>
<feature type="active site" evidence="1">
    <location>
        <position position="69"/>
    </location>
</feature>
<feature type="active site" description="Proton acceptor" evidence="1">
    <location>
        <position position="135"/>
    </location>
</feature>
<feature type="binding site" evidence="1">
    <location>
        <position position="67"/>
    </location>
    <ligand>
        <name>Zn(2+)</name>
        <dbReference type="ChEBI" id="CHEBI:29105"/>
        <label>1</label>
    </ligand>
</feature>
<feature type="binding site" evidence="1">
    <location>
        <position position="101"/>
    </location>
    <ligand>
        <name>Zn(2+)</name>
        <dbReference type="ChEBI" id="CHEBI:29105"/>
        <label>1</label>
    </ligand>
</feature>
<feature type="binding site" evidence="1">
    <location>
        <position position="101"/>
    </location>
    <ligand>
        <name>Zn(2+)</name>
        <dbReference type="ChEBI" id="CHEBI:29105"/>
        <label>2</label>
    </ligand>
</feature>
<feature type="binding site" evidence="1">
    <location>
        <position position="136"/>
    </location>
    <ligand>
        <name>Zn(2+)</name>
        <dbReference type="ChEBI" id="CHEBI:29105"/>
        <label>2</label>
    </ligand>
</feature>
<feature type="binding site" evidence="1">
    <location>
        <position position="164"/>
    </location>
    <ligand>
        <name>Zn(2+)</name>
        <dbReference type="ChEBI" id="CHEBI:29105"/>
        <label>1</label>
    </ligand>
</feature>
<feature type="binding site" evidence="1">
    <location>
        <position position="353"/>
    </location>
    <ligand>
        <name>Zn(2+)</name>
        <dbReference type="ChEBI" id="CHEBI:29105"/>
        <label>2</label>
    </ligand>
</feature>
<proteinExistence type="inferred from homology"/>
<protein>
    <recommendedName>
        <fullName evidence="1">Succinyl-diaminopimelate desuccinylase</fullName>
        <shortName evidence="1">SDAP desuccinylase</shortName>
        <ecNumber evidence="1">3.5.1.18</ecNumber>
    </recommendedName>
    <alternativeName>
        <fullName evidence="1">N-succinyl-LL-2,6-diaminoheptanedioate amidohydrolase</fullName>
    </alternativeName>
</protein>